<sequence>MYRALTRDIEVTVEPFYLAEQSDPEDSRYVWGYRVVIVNQSNVAVRLINRYWHITDQNGQVDEVSGPGVIGEQPRLAPGESFEYSSGCPLDTPSGIMFGRYEMETDDAETFDVAIPAFSLDTPDLRRVLN</sequence>
<name>APAG_ALLAM</name>
<accession>B9JQX3</accession>
<evidence type="ECO:0000255" key="1">
    <source>
        <dbReference type="HAMAP-Rule" id="MF_00791"/>
    </source>
</evidence>
<proteinExistence type="inferred from homology"/>
<organism>
    <name type="scientific">Allorhizobium ampelinum (strain ATCC BAA-846 / DSM 112012 / S4)</name>
    <name type="common">Agrobacterium vitis (strain S4)</name>
    <dbReference type="NCBI Taxonomy" id="311402"/>
    <lineage>
        <taxon>Bacteria</taxon>
        <taxon>Pseudomonadati</taxon>
        <taxon>Pseudomonadota</taxon>
        <taxon>Alphaproteobacteria</taxon>
        <taxon>Hyphomicrobiales</taxon>
        <taxon>Rhizobiaceae</taxon>
        <taxon>Rhizobium/Agrobacterium group</taxon>
        <taxon>Allorhizobium</taxon>
        <taxon>Allorhizobium ampelinum</taxon>
    </lineage>
</organism>
<keyword id="KW-1185">Reference proteome</keyword>
<reference key="1">
    <citation type="journal article" date="2009" name="J. Bacteriol.">
        <title>Genome sequences of three Agrobacterium biovars help elucidate the evolution of multichromosome genomes in bacteria.</title>
        <authorList>
            <person name="Slater S.C."/>
            <person name="Goldman B.S."/>
            <person name="Goodner B."/>
            <person name="Setubal J.C."/>
            <person name="Farrand S.K."/>
            <person name="Nester E.W."/>
            <person name="Burr T.J."/>
            <person name="Banta L."/>
            <person name="Dickerman A.W."/>
            <person name="Paulsen I."/>
            <person name="Otten L."/>
            <person name="Suen G."/>
            <person name="Welch R."/>
            <person name="Almeida N.F."/>
            <person name="Arnold F."/>
            <person name="Burton O.T."/>
            <person name="Du Z."/>
            <person name="Ewing A."/>
            <person name="Godsy E."/>
            <person name="Heisel S."/>
            <person name="Houmiel K.L."/>
            <person name="Jhaveri J."/>
            <person name="Lu J."/>
            <person name="Miller N.M."/>
            <person name="Norton S."/>
            <person name="Chen Q."/>
            <person name="Phoolcharoen W."/>
            <person name="Ohlin V."/>
            <person name="Ondrusek D."/>
            <person name="Pride N."/>
            <person name="Stricklin S.L."/>
            <person name="Sun J."/>
            <person name="Wheeler C."/>
            <person name="Wilson L."/>
            <person name="Zhu H."/>
            <person name="Wood D.W."/>
        </authorList>
    </citation>
    <scope>NUCLEOTIDE SEQUENCE [LARGE SCALE GENOMIC DNA]</scope>
    <source>
        <strain>ATCC BAA-846 / DSM 112012 / S4</strain>
    </source>
</reference>
<feature type="chain" id="PRO_1000148493" description="Protein ApaG">
    <location>
        <begin position="1"/>
        <end position="130"/>
    </location>
</feature>
<feature type="domain" description="ApaG" evidence="1">
    <location>
        <begin position="3"/>
        <end position="127"/>
    </location>
</feature>
<protein>
    <recommendedName>
        <fullName evidence="1">Protein ApaG</fullName>
    </recommendedName>
</protein>
<dbReference type="EMBL" id="CP000633">
    <property type="protein sequence ID" value="ACM35386.1"/>
    <property type="molecule type" value="Genomic_DNA"/>
</dbReference>
<dbReference type="RefSeq" id="WP_015914814.1">
    <property type="nucleotide sequence ID" value="NC_011989.1"/>
</dbReference>
<dbReference type="SMR" id="B9JQX3"/>
<dbReference type="STRING" id="311402.Avi_0543"/>
<dbReference type="KEGG" id="avi:Avi_0543"/>
<dbReference type="eggNOG" id="COG2967">
    <property type="taxonomic scope" value="Bacteria"/>
</dbReference>
<dbReference type="HOGENOM" id="CLU_128074_1_0_5"/>
<dbReference type="Proteomes" id="UP000001596">
    <property type="component" value="Chromosome 1"/>
</dbReference>
<dbReference type="Gene3D" id="2.60.40.1470">
    <property type="entry name" value="ApaG domain"/>
    <property type="match status" value="1"/>
</dbReference>
<dbReference type="HAMAP" id="MF_00791">
    <property type="entry name" value="ApaG"/>
    <property type="match status" value="1"/>
</dbReference>
<dbReference type="InterPro" id="IPR050718">
    <property type="entry name" value="ApaG-like"/>
</dbReference>
<dbReference type="InterPro" id="IPR007474">
    <property type="entry name" value="ApaG_domain"/>
</dbReference>
<dbReference type="InterPro" id="IPR036767">
    <property type="entry name" value="ApaG_sf"/>
</dbReference>
<dbReference type="InterPro" id="IPR023065">
    <property type="entry name" value="Uncharacterised_ApaG"/>
</dbReference>
<dbReference type="NCBIfam" id="NF003967">
    <property type="entry name" value="PRK05461.1"/>
    <property type="match status" value="1"/>
</dbReference>
<dbReference type="PANTHER" id="PTHR47191">
    <property type="entry name" value="OS05G0170800 PROTEIN"/>
    <property type="match status" value="1"/>
</dbReference>
<dbReference type="PANTHER" id="PTHR47191:SF2">
    <property type="entry name" value="OS05G0170800 PROTEIN"/>
    <property type="match status" value="1"/>
</dbReference>
<dbReference type="Pfam" id="PF04379">
    <property type="entry name" value="DUF525"/>
    <property type="match status" value="1"/>
</dbReference>
<dbReference type="SUPFAM" id="SSF110069">
    <property type="entry name" value="ApaG-like"/>
    <property type="match status" value="1"/>
</dbReference>
<dbReference type="PROSITE" id="PS51087">
    <property type="entry name" value="APAG"/>
    <property type="match status" value="1"/>
</dbReference>
<gene>
    <name evidence="1" type="primary">apaG</name>
    <name type="ordered locus">Avi_0543</name>
</gene>